<keyword id="KW-0238">DNA-binding</keyword>
<keyword id="KW-0804">Transcription</keyword>
<keyword id="KW-0805">Transcription regulation</keyword>
<gene>
    <name type="primary">ntaR</name>
    <name type="synonym">nmoR</name>
</gene>
<reference key="1">
    <citation type="submission" date="1995-10" db="EMBL/GenBank/DDBJ databases">
        <authorList>
            <person name="Knobel H.R."/>
            <person name="Egli T.E."/>
            <person name="der Meer J.R."/>
        </authorList>
    </citation>
    <scope>NUCLEOTIDE SEQUENCE [GENOMIC DNA]</scope>
    <source>
        <strain>ATCC 29600 / DSM 10368 / NCIMB 13986</strain>
    </source>
</reference>
<reference key="2">
    <citation type="submission" date="1995-12" db="EMBL/GenBank/DDBJ databases">
        <authorList>
            <person name="Xu Y."/>
            <person name="Mortimer M.W."/>
            <person name="Kahn M.L."/>
            <person name="Brockman F.J."/>
            <person name="Xun L."/>
        </authorList>
    </citation>
    <scope>NUCLEOTIDE SEQUENCE [GENOMIC DNA]</scope>
    <source>
        <strain>ATCC 29600 / DSM 10368 / NCIMB 13986</strain>
    </source>
</reference>
<dbReference type="EMBL" id="U39411">
    <property type="protein sequence ID" value="AAB05942.1"/>
    <property type="molecule type" value="Genomic_DNA"/>
</dbReference>
<dbReference type="EMBL" id="L49438">
    <property type="protein sequence ID" value="AAB47923.1"/>
    <property type="molecule type" value="Genomic_DNA"/>
</dbReference>
<dbReference type="SMR" id="P54988"/>
<dbReference type="OrthoDB" id="8247358at2"/>
<dbReference type="GO" id="GO:0003677">
    <property type="term" value="F:DNA binding"/>
    <property type="evidence" value="ECO:0007669"/>
    <property type="project" value="UniProtKB-KW"/>
</dbReference>
<dbReference type="GO" id="GO:0003700">
    <property type="term" value="F:DNA-binding transcription factor activity"/>
    <property type="evidence" value="ECO:0007669"/>
    <property type="project" value="InterPro"/>
</dbReference>
<dbReference type="Gene3D" id="1.20.120.530">
    <property type="entry name" value="GntR ligand-binding domain-like"/>
    <property type="match status" value="1"/>
</dbReference>
<dbReference type="Gene3D" id="1.10.10.10">
    <property type="entry name" value="Winged helix-like DNA-binding domain superfamily/Winged helix DNA-binding domain"/>
    <property type="match status" value="1"/>
</dbReference>
<dbReference type="InterPro" id="IPR011711">
    <property type="entry name" value="GntR_C"/>
</dbReference>
<dbReference type="InterPro" id="IPR008920">
    <property type="entry name" value="TF_FadR/GntR_C"/>
</dbReference>
<dbReference type="InterPro" id="IPR000524">
    <property type="entry name" value="Tscrpt_reg_HTH_GntR"/>
</dbReference>
<dbReference type="InterPro" id="IPR036388">
    <property type="entry name" value="WH-like_DNA-bd_sf"/>
</dbReference>
<dbReference type="InterPro" id="IPR036390">
    <property type="entry name" value="WH_DNA-bd_sf"/>
</dbReference>
<dbReference type="PANTHER" id="PTHR43537:SF45">
    <property type="entry name" value="GNTR FAMILY REGULATORY PROTEIN"/>
    <property type="match status" value="1"/>
</dbReference>
<dbReference type="PANTHER" id="PTHR43537">
    <property type="entry name" value="TRANSCRIPTIONAL REGULATOR, GNTR FAMILY"/>
    <property type="match status" value="1"/>
</dbReference>
<dbReference type="Pfam" id="PF07729">
    <property type="entry name" value="FCD"/>
    <property type="match status" value="1"/>
</dbReference>
<dbReference type="Pfam" id="PF00392">
    <property type="entry name" value="GntR"/>
    <property type="match status" value="1"/>
</dbReference>
<dbReference type="PRINTS" id="PR00035">
    <property type="entry name" value="HTHGNTR"/>
</dbReference>
<dbReference type="SMART" id="SM00895">
    <property type="entry name" value="FCD"/>
    <property type="match status" value="1"/>
</dbReference>
<dbReference type="SMART" id="SM00345">
    <property type="entry name" value="HTH_GNTR"/>
    <property type="match status" value="1"/>
</dbReference>
<dbReference type="SUPFAM" id="SSF48008">
    <property type="entry name" value="GntR ligand-binding domain-like"/>
    <property type="match status" value="1"/>
</dbReference>
<dbReference type="SUPFAM" id="SSF46785">
    <property type="entry name" value="Winged helix' DNA-binding domain"/>
    <property type="match status" value="1"/>
</dbReference>
<dbReference type="PROSITE" id="PS50949">
    <property type="entry name" value="HTH_GNTR"/>
    <property type="match status" value="1"/>
</dbReference>
<accession>P54988</accession>
<organism>
    <name type="scientific">Aminobacter aminovorans</name>
    <name type="common">Chelatobacter heintzii</name>
    <dbReference type="NCBI Taxonomy" id="83263"/>
    <lineage>
        <taxon>Bacteria</taxon>
        <taxon>Pseudomonadati</taxon>
        <taxon>Pseudomonadota</taxon>
        <taxon>Alphaproteobacteria</taxon>
        <taxon>Hyphomicrobiales</taxon>
        <taxon>Phyllobacteriaceae</taxon>
        <taxon>Aminobacter</taxon>
    </lineage>
</organism>
<comment type="function">
    <text>Probable regulator for the expression of the NTA monooxygenase subunits.</text>
</comment>
<proteinExistence type="predicted"/>
<evidence type="ECO:0000255" key="1">
    <source>
        <dbReference type="PROSITE-ProRule" id="PRU00307"/>
    </source>
</evidence>
<protein>
    <recommendedName>
        <fullName>Nta operon transcriptional regulator</fullName>
    </recommendedName>
</protein>
<name>NTRA_AMIAI</name>
<sequence length="210" mass="24357">MAVSYHFRPGERINEVELAAQLKVSRTPLREALNRLTTEGFLTTTANKGFFARVLEANTLFDLYELRAFLEQSAVRLACQRATDQEIAVLRDFLLEQDESGEISAGEMLKLDEEFHFRLVGLSQNEELLKTVRSISERIRFARWIDWQSRRLSHEQHLHITSLLADRKEDECAAFVLAHIQKHFDQILEIIRGAVTEIYTRNSDSPRKAR</sequence>
<feature type="chain" id="PRO_0000050661" description="Nta operon transcriptional regulator">
    <location>
        <begin position="1"/>
        <end position="210"/>
    </location>
</feature>
<feature type="domain" description="HTH gntR-type" evidence="1">
    <location>
        <begin position="1"/>
        <end position="55"/>
    </location>
</feature>
<feature type="DNA-binding region" description="H-T-H motif" evidence="1">
    <location>
        <begin position="15"/>
        <end position="34"/>
    </location>
</feature>